<comment type="function">
    <text evidence="1">Catalyzes the interconversion of 2-phosphoglycerate and 3-phosphoglycerate.</text>
</comment>
<comment type="catalytic activity">
    <reaction evidence="1">
        <text>(2R)-2-phosphoglycerate = (2R)-3-phosphoglycerate</text>
        <dbReference type="Rhea" id="RHEA:15901"/>
        <dbReference type="ChEBI" id="CHEBI:58272"/>
        <dbReference type="ChEBI" id="CHEBI:58289"/>
        <dbReference type="EC" id="5.4.2.11"/>
    </reaction>
</comment>
<comment type="pathway">
    <text evidence="1">Carbohydrate degradation; glycolysis; pyruvate from D-glyceraldehyde 3-phosphate: step 3/5.</text>
</comment>
<comment type="subunit">
    <text evidence="1">Homodimer.</text>
</comment>
<comment type="similarity">
    <text evidence="1">Belongs to the phosphoglycerate mutase family. BPG-dependent PGAM subfamily.</text>
</comment>
<evidence type="ECO:0000255" key="1">
    <source>
        <dbReference type="HAMAP-Rule" id="MF_01039"/>
    </source>
</evidence>
<keyword id="KW-0312">Gluconeogenesis</keyword>
<keyword id="KW-0324">Glycolysis</keyword>
<keyword id="KW-0413">Isomerase</keyword>
<keyword id="KW-1185">Reference proteome</keyword>
<accession>B2TUY6</accession>
<dbReference type="EC" id="5.4.2.11" evidence="1"/>
<dbReference type="EMBL" id="CP001063">
    <property type="protein sequence ID" value="ACD09975.1"/>
    <property type="molecule type" value="Genomic_DNA"/>
</dbReference>
<dbReference type="RefSeq" id="WP_001295305.1">
    <property type="nucleotide sequence ID" value="NC_010658.1"/>
</dbReference>
<dbReference type="SMR" id="B2TUY6"/>
<dbReference type="STRING" id="344609.SbBS512_E0676"/>
<dbReference type="GeneID" id="93776726"/>
<dbReference type="KEGG" id="sbc:SbBS512_E0676"/>
<dbReference type="HOGENOM" id="CLU_033323_1_1_6"/>
<dbReference type="UniPathway" id="UPA00109">
    <property type="reaction ID" value="UER00186"/>
</dbReference>
<dbReference type="Proteomes" id="UP000001030">
    <property type="component" value="Chromosome"/>
</dbReference>
<dbReference type="GO" id="GO:0004619">
    <property type="term" value="F:phosphoglycerate mutase activity"/>
    <property type="evidence" value="ECO:0007669"/>
    <property type="project" value="UniProtKB-EC"/>
</dbReference>
<dbReference type="GO" id="GO:0006094">
    <property type="term" value="P:gluconeogenesis"/>
    <property type="evidence" value="ECO:0007669"/>
    <property type="project" value="UniProtKB-UniRule"/>
</dbReference>
<dbReference type="GO" id="GO:0006096">
    <property type="term" value="P:glycolytic process"/>
    <property type="evidence" value="ECO:0007669"/>
    <property type="project" value="UniProtKB-UniRule"/>
</dbReference>
<dbReference type="CDD" id="cd07067">
    <property type="entry name" value="HP_PGM_like"/>
    <property type="match status" value="1"/>
</dbReference>
<dbReference type="FunFam" id="3.40.50.1240:FF:000003">
    <property type="entry name" value="2,3-bisphosphoglycerate-dependent phosphoglycerate mutase"/>
    <property type="match status" value="1"/>
</dbReference>
<dbReference type="Gene3D" id="3.40.50.1240">
    <property type="entry name" value="Phosphoglycerate mutase-like"/>
    <property type="match status" value="1"/>
</dbReference>
<dbReference type="HAMAP" id="MF_01039">
    <property type="entry name" value="PGAM_GpmA"/>
    <property type="match status" value="1"/>
</dbReference>
<dbReference type="InterPro" id="IPR013078">
    <property type="entry name" value="His_Pase_superF_clade-1"/>
</dbReference>
<dbReference type="InterPro" id="IPR029033">
    <property type="entry name" value="His_PPase_superfam"/>
</dbReference>
<dbReference type="InterPro" id="IPR001345">
    <property type="entry name" value="PG/BPGM_mutase_AS"/>
</dbReference>
<dbReference type="InterPro" id="IPR005952">
    <property type="entry name" value="Phosphogly_mut1"/>
</dbReference>
<dbReference type="NCBIfam" id="TIGR01258">
    <property type="entry name" value="pgm_1"/>
    <property type="match status" value="1"/>
</dbReference>
<dbReference type="NCBIfam" id="NF010713">
    <property type="entry name" value="PRK14115.1"/>
    <property type="match status" value="1"/>
</dbReference>
<dbReference type="PANTHER" id="PTHR11931">
    <property type="entry name" value="PHOSPHOGLYCERATE MUTASE"/>
    <property type="match status" value="1"/>
</dbReference>
<dbReference type="Pfam" id="PF00300">
    <property type="entry name" value="His_Phos_1"/>
    <property type="match status" value="1"/>
</dbReference>
<dbReference type="PIRSF" id="PIRSF000709">
    <property type="entry name" value="6PFK_2-Ptase"/>
    <property type="match status" value="1"/>
</dbReference>
<dbReference type="SMART" id="SM00855">
    <property type="entry name" value="PGAM"/>
    <property type="match status" value="1"/>
</dbReference>
<dbReference type="SUPFAM" id="SSF53254">
    <property type="entry name" value="Phosphoglycerate mutase-like"/>
    <property type="match status" value="1"/>
</dbReference>
<dbReference type="PROSITE" id="PS00175">
    <property type="entry name" value="PG_MUTASE"/>
    <property type="match status" value="1"/>
</dbReference>
<gene>
    <name evidence="1" type="primary">gpmA</name>
    <name type="ordered locus">SbBS512_E0676</name>
</gene>
<name>GPMA_SHIB3</name>
<reference key="1">
    <citation type="submission" date="2008-05" db="EMBL/GenBank/DDBJ databases">
        <title>Complete sequence of Shigella boydii serotype 18 strain BS512.</title>
        <authorList>
            <person name="Rasko D.A."/>
            <person name="Rosovitz M."/>
            <person name="Maurelli A.T."/>
            <person name="Myers G."/>
            <person name="Seshadri R."/>
            <person name="Cer R."/>
            <person name="Jiang L."/>
            <person name="Ravel J."/>
            <person name="Sebastian Y."/>
        </authorList>
    </citation>
    <scope>NUCLEOTIDE SEQUENCE [LARGE SCALE GENOMIC DNA]</scope>
    <source>
        <strain>CDC 3083-94 / BS512</strain>
    </source>
</reference>
<organism>
    <name type="scientific">Shigella boydii serotype 18 (strain CDC 3083-94 / BS512)</name>
    <dbReference type="NCBI Taxonomy" id="344609"/>
    <lineage>
        <taxon>Bacteria</taxon>
        <taxon>Pseudomonadati</taxon>
        <taxon>Pseudomonadota</taxon>
        <taxon>Gammaproteobacteria</taxon>
        <taxon>Enterobacterales</taxon>
        <taxon>Enterobacteriaceae</taxon>
        <taxon>Shigella</taxon>
    </lineage>
</organism>
<proteinExistence type="inferred from homology"/>
<sequence>MAVTKLVLVRHGESQWNKENRFTGWYDVDLSEKGVSEAKAAGKLLKEEGYSFDFAYTSVLKRAIHTLWNVLDELDQAWLPVEKSWKLNERHYGALQGLNKAETAEKYGDEQVKQWRRGFAVTPPELTKDDERYPGHDPRYAKLSEKELPLTESLALTIDRVIPYWNETILPRMKSGERVIIAAHGNSLRALVKYLDNMSEEEILELNIPTGVPLVYEFDENFKPLKRYYLGNADEIAAKAAAVANQGKAK</sequence>
<feature type="chain" id="PRO_1000135978" description="2,3-bisphosphoglycerate-dependent phosphoglycerate mutase">
    <location>
        <begin position="1"/>
        <end position="250"/>
    </location>
</feature>
<feature type="active site" description="Tele-phosphohistidine intermediate" evidence="1">
    <location>
        <position position="11"/>
    </location>
</feature>
<feature type="active site" description="Proton donor/acceptor" evidence="1">
    <location>
        <position position="89"/>
    </location>
</feature>
<feature type="binding site" evidence="1">
    <location>
        <begin position="10"/>
        <end position="17"/>
    </location>
    <ligand>
        <name>substrate</name>
    </ligand>
</feature>
<feature type="binding site" evidence="1">
    <location>
        <begin position="23"/>
        <end position="24"/>
    </location>
    <ligand>
        <name>substrate</name>
    </ligand>
</feature>
<feature type="binding site" evidence="1">
    <location>
        <position position="62"/>
    </location>
    <ligand>
        <name>substrate</name>
    </ligand>
</feature>
<feature type="binding site" evidence="1">
    <location>
        <begin position="89"/>
        <end position="92"/>
    </location>
    <ligand>
        <name>substrate</name>
    </ligand>
</feature>
<feature type="binding site" evidence="1">
    <location>
        <position position="100"/>
    </location>
    <ligand>
        <name>substrate</name>
    </ligand>
</feature>
<feature type="binding site" evidence="1">
    <location>
        <begin position="116"/>
        <end position="117"/>
    </location>
    <ligand>
        <name>substrate</name>
    </ligand>
</feature>
<feature type="binding site" evidence="1">
    <location>
        <begin position="185"/>
        <end position="186"/>
    </location>
    <ligand>
        <name>substrate</name>
    </ligand>
</feature>
<feature type="site" description="Transition state stabilizer" evidence="1">
    <location>
        <position position="184"/>
    </location>
</feature>
<protein>
    <recommendedName>
        <fullName evidence="1">2,3-bisphosphoglycerate-dependent phosphoglycerate mutase</fullName>
        <shortName evidence="1">BPG-dependent PGAM</shortName>
        <shortName evidence="1">PGAM</shortName>
        <shortName evidence="1">Phosphoglyceromutase</shortName>
        <shortName evidence="1">dPGM</shortName>
        <ecNumber evidence="1">5.4.2.11</ecNumber>
    </recommendedName>
</protein>